<organism>
    <name type="scientific">Staphylococcus aureus (strain MRSA252)</name>
    <dbReference type="NCBI Taxonomy" id="282458"/>
    <lineage>
        <taxon>Bacteria</taxon>
        <taxon>Bacillati</taxon>
        <taxon>Bacillota</taxon>
        <taxon>Bacilli</taxon>
        <taxon>Bacillales</taxon>
        <taxon>Staphylococcaceae</taxon>
        <taxon>Staphylococcus</taxon>
    </lineage>
</organism>
<gene>
    <name evidence="1" type="primary">sepF</name>
    <name type="ordered locus">SAR1165</name>
</gene>
<keyword id="KW-0131">Cell cycle</keyword>
<keyword id="KW-0132">Cell division</keyword>
<keyword id="KW-0963">Cytoplasm</keyword>
<keyword id="KW-0717">Septation</keyword>
<feature type="chain" id="PRO_0000334078" description="Cell division protein SepF">
    <location>
        <begin position="1"/>
        <end position="187"/>
    </location>
</feature>
<feature type="region of interest" description="Disordered" evidence="2">
    <location>
        <begin position="21"/>
        <end position="97"/>
    </location>
</feature>
<feature type="compositionally biased region" description="Polar residues" evidence="2">
    <location>
        <begin position="38"/>
        <end position="63"/>
    </location>
</feature>
<feature type="compositionally biased region" description="Polar residues" evidence="2">
    <location>
        <begin position="70"/>
        <end position="97"/>
    </location>
</feature>
<name>SEPF_STAAR</name>
<accession>Q6GHP6</accession>
<dbReference type="EMBL" id="BX571856">
    <property type="protein sequence ID" value="CAG40167.1"/>
    <property type="molecule type" value="Genomic_DNA"/>
</dbReference>
<dbReference type="SMR" id="Q6GHP6"/>
<dbReference type="KEGG" id="sar:SAR1165"/>
<dbReference type="HOGENOM" id="CLU_078499_4_1_9"/>
<dbReference type="Proteomes" id="UP000000596">
    <property type="component" value="Chromosome"/>
</dbReference>
<dbReference type="GO" id="GO:0005737">
    <property type="term" value="C:cytoplasm"/>
    <property type="evidence" value="ECO:0007669"/>
    <property type="project" value="UniProtKB-SubCell"/>
</dbReference>
<dbReference type="GO" id="GO:0000917">
    <property type="term" value="P:division septum assembly"/>
    <property type="evidence" value="ECO:0007669"/>
    <property type="project" value="UniProtKB-KW"/>
</dbReference>
<dbReference type="GO" id="GO:0043093">
    <property type="term" value="P:FtsZ-dependent cytokinesis"/>
    <property type="evidence" value="ECO:0007669"/>
    <property type="project" value="UniProtKB-UniRule"/>
</dbReference>
<dbReference type="Gene3D" id="3.30.110.150">
    <property type="entry name" value="SepF-like protein"/>
    <property type="match status" value="1"/>
</dbReference>
<dbReference type="HAMAP" id="MF_01197">
    <property type="entry name" value="SepF"/>
    <property type="match status" value="1"/>
</dbReference>
<dbReference type="InterPro" id="IPR023052">
    <property type="entry name" value="Cell_div_SepF"/>
</dbReference>
<dbReference type="InterPro" id="IPR007561">
    <property type="entry name" value="Cell_div_SepF/SepF-rel"/>
</dbReference>
<dbReference type="InterPro" id="IPR038594">
    <property type="entry name" value="SepF-like_sf"/>
</dbReference>
<dbReference type="PANTHER" id="PTHR35798">
    <property type="entry name" value="CELL DIVISION PROTEIN SEPF"/>
    <property type="match status" value="1"/>
</dbReference>
<dbReference type="PANTHER" id="PTHR35798:SF1">
    <property type="entry name" value="CELL DIVISION PROTEIN SEPF"/>
    <property type="match status" value="1"/>
</dbReference>
<dbReference type="Pfam" id="PF04472">
    <property type="entry name" value="SepF"/>
    <property type="match status" value="1"/>
</dbReference>
<proteinExistence type="inferred from homology"/>
<comment type="function">
    <text evidence="1">Cell division protein that is part of the divisome complex and is recruited early to the Z-ring. Probably stimulates Z-ring formation, perhaps through the cross-linking of FtsZ protofilaments. Its function overlaps with FtsA.</text>
</comment>
<comment type="subunit">
    <text evidence="1">Homodimer. Interacts with FtsZ.</text>
</comment>
<comment type="subcellular location">
    <subcellularLocation>
        <location evidence="1">Cytoplasm</location>
    </subcellularLocation>
    <text evidence="1">Localizes to the division site, in a FtsZ-dependent manner.</text>
</comment>
<comment type="similarity">
    <text evidence="1">Belongs to the SepF family.</text>
</comment>
<evidence type="ECO:0000255" key="1">
    <source>
        <dbReference type="HAMAP-Rule" id="MF_01197"/>
    </source>
</evidence>
<evidence type="ECO:0000256" key="2">
    <source>
        <dbReference type="SAM" id="MobiDB-lite"/>
    </source>
</evidence>
<reference key="1">
    <citation type="journal article" date="2004" name="Proc. Natl. Acad. Sci. U.S.A.">
        <title>Complete genomes of two clinical Staphylococcus aureus strains: evidence for the rapid evolution of virulence and drug resistance.</title>
        <authorList>
            <person name="Holden M.T.G."/>
            <person name="Feil E.J."/>
            <person name="Lindsay J.A."/>
            <person name="Peacock S.J."/>
            <person name="Day N.P.J."/>
            <person name="Enright M.C."/>
            <person name="Foster T.J."/>
            <person name="Moore C.E."/>
            <person name="Hurst L."/>
            <person name="Atkin R."/>
            <person name="Barron A."/>
            <person name="Bason N."/>
            <person name="Bentley S.D."/>
            <person name="Chillingworth C."/>
            <person name="Chillingworth T."/>
            <person name="Churcher C."/>
            <person name="Clark L."/>
            <person name="Corton C."/>
            <person name="Cronin A."/>
            <person name="Doggett J."/>
            <person name="Dowd L."/>
            <person name="Feltwell T."/>
            <person name="Hance Z."/>
            <person name="Harris B."/>
            <person name="Hauser H."/>
            <person name="Holroyd S."/>
            <person name="Jagels K."/>
            <person name="James K.D."/>
            <person name="Lennard N."/>
            <person name="Line A."/>
            <person name="Mayes R."/>
            <person name="Moule S."/>
            <person name="Mungall K."/>
            <person name="Ormond D."/>
            <person name="Quail M.A."/>
            <person name="Rabbinowitsch E."/>
            <person name="Rutherford K.M."/>
            <person name="Sanders M."/>
            <person name="Sharp S."/>
            <person name="Simmonds M."/>
            <person name="Stevens K."/>
            <person name="Whitehead S."/>
            <person name="Barrell B.G."/>
            <person name="Spratt B.G."/>
            <person name="Parkhill J."/>
        </authorList>
    </citation>
    <scope>NUCLEOTIDE SEQUENCE [LARGE SCALE GENOMIC DNA]</scope>
    <source>
        <strain>MRSA252</strain>
    </source>
</reference>
<protein>
    <recommendedName>
        <fullName evidence="1">Cell division protein SepF</fullName>
    </recommendedName>
</protein>
<sequence>MSHLALKDLFSGFFVIDDEEEVEVPDKQQQVNEAPAKEQSQQTTKQNAIKSVPQKSASRYTTTSEERNNRMSNYSKNNSRNVVTMNNATPNNASQESSKMCLFEPRVFSDTQDIADELKNRRATLVNLQRIDKVSAKRIIDFLSGTVYAIGGDIQRVGTDIFLCTPDNVEVAGSITDHIENVEHSFD</sequence>